<keyword id="KW-0067">ATP-binding</keyword>
<keyword id="KW-0963">Cytoplasm</keyword>
<keyword id="KW-0436">Ligase</keyword>
<keyword id="KW-0547">Nucleotide-binding</keyword>
<keyword id="KW-0566">Pantothenate biosynthesis</keyword>
<comment type="function">
    <text evidence="1">Catalyzes the condensation of pantoate with beta-alanine in an ATP-dependent reaction via a pantoyl-adenylate intermediate.</text>
</comment>
<comment type="catalytic activity">
    <reaction evidence="1">
        <text>(R)-pantoate + beta-alanine + ATP = (R)-pantothenate + AMP + diphosphate + H(+)</text>
        <dbReference type="Rhea" id="RHEA:10912"/>
        <dbReference type="ChEBI" id="CHEBI:15378"/>
        <dbReference type="ChEBI" id="CHEBI:15980"/>
        <dbReference type="ChEBI" id="CHEBI:29032"/>
        <dbReference type="ChEBI" id="CHEBI:30616"/>
        <dbReference type="ChEBI" id="CHEBI:33019"/>
        <dbReference type="ChEBI" id="CHEBI:57966"/>
        <dbReference type="ChEBI" id="CHEBI:456215"/>
        <dbReference type="EC" id="6.3.2.1"/>
    </reaction>
</comment>
<comment type="pathway">
    <text evidence="1">Cofactor biosynthesis; (R)-pantothenate biosynthesis; (R)-pantothenate from (R)-pantoate and beta-alanine: step 1/1.</text>
</comment>
<comment type="subunit">
    <text evidence="1">Homodimer.</text>
</comment>
<comment type="subcellular location">
    <subcellularLocation>
        <location evidence="1">Cytoplasm</location>
    </subcellularLocation>
</comment>
<comment type="miscellaneous">
    <text evidence="1">The reaction proceeds by a bi uni uni bi ping pong mechanism.</text>
</comment>
<comment type="similarity">
    <text evidence="1">Belongs to the pantothenate synthetase family.</text>
</comment>
<feature type="chain" id="PRO_0000305553" description="Pantothenate synthetase">
    <location>
        <begin position="1"/>
        <end position="283"/>
    </location>
</feature>
<feature type="active site" description="Proton donor" evidence="1">
    <location>
        <position position="37"/>
    </location>
</feature>
<feature type="binding site" evidence="1">
    <location>
        <begin position="30"/>
        <end position="37"/>
    </location>
    <ligand>
        <name>ATP</name>
        <dbReference type="ChEBI" id="CHEBI:30616"/>
    </ligand>
</feature>
<feature type="binding site" evidence="1">
    <location>
        <position position="61"/>
    </location>
    <ligand>
        <name>(R)-pantoate</name>
        <dbReference type="ChEBI" id="CHEBI:15980"/>
    </ligand>
</feature>
<feature type="binding site" evidence="1">
    <location>
        <position position="61"/>
    </location>
    <ligand>
        <name>beta-alanine</name>
        <dbReference type="ChEBI" id="CHEBI:57966"/>
    </ligand>
</feature>
<feature type="binding site" evidence="1">
    <location>
        <begin position="149"/>
        <end position="152"/>
    </location>
    <ligand>
        <name>ATP</name>
        <dbReference type="ChEBI" id="CHEBI:30616"/>
    </ligand>
</feature>
<feature type="binding site" evidence="1">
    <location>
        <position position="155"/>
    </location>
    <ligand>
        <name>(R)-pantoate</name>
        <dbReference type="ChEBI" id="CHEBI:15980"/>
    </ligand>
</feature>
<feature type="binding site" evidence="1">
    <location>
        <begin position="186"/>
        <end position="189"/>
    </location>
    <ligand>
        <name>ATP</name>
        <dbReference type="ChEBI" id="CHEBI:30616"/>
    </ligand>
</feature>
<dbReference type="EC" id="6.3.2.1" evidence="1"/>
<dbReference type="EMBL" id="CP000266">
    <property type="protein sequence ID" value="ABF02408.1"/>
    <property type="molecule type" value="Genomic_DNA"/>
</dbReference>
<dbReference type="RefSeq" id="WP_000905404.1">
    <property type="nucleotide sequence ID" value="NC_008258.1"/>
</dbReference>
<dbReference type="SMR" id="Q0T868"/>
<dbReference type="KEGG" id="sfv:SFV_0123"/>
<dbReference type="HOGENOM" id="CLU_047148_0_0_6"/>
<dbReference type="UniPathway" id="UPA00028">
    <property type="reaction ID" value="UER00005"/>
</dbReference>
<dbReference type="Proteomes" id="UP000000659">
    <property type="component" value="Chromosome"/>
</dbReference>
<dbReference type="GO" id="GO:0005829">
    <property type="term" value="C:cytosol"/>
    <property type="evidence" value="ECO:0007669"/>
    <property type="project" value="TreeGrafter"/>
</dbReference>
<dbReference type="GO" id="GO:0005524">
    <property type="term" value="F:ATP binding"/>
    <property type="evidence" value="ECO:0007669"/>
    <property type="project" value="UniProtKB-KW"/>
</dbReference>
<dbReference type="GO" id="GO:0004592">
    <property type="term" value="F:pantoate-beta-alanine ligase activity"/>
    <property type="evidence" value="ECO:0007669"/>
    <property type="project" value="UniProtKB-UniRule"/>
</dbReference>
<dbReference type="GO" id="GO:0015940">
    <property type="term" value="P:pantothenate biosynthetic process"/>
    <property type="evidence" value="ECO:0007669"/>
    <property type="project" value="UniProtKB-UniRule"/>
</dbReference>
<dbReference type="CDD" id="cd00560">
    <property type="entry name" value="PanC"/>
    <property type="match status" value="1"/>
</dbReference>
<dbReference type="FunFam" id="3.30.1300.10:FF:000001">
    <property type="entry name" value="Pantothenate synthetase"/>
    <property type="match status" value="1"/>
</dbReference>
<dbReference type="FunFam" id="3.40.50.620:FF:000013">
    <property type="entry name" value="Pantothenate synthetase"/>
    <property type="match status" value="1"/>
</dbReference>
<dbReference type="Gene3D" id="3.40.50.620">
    <property type="entry name" value="HUPs"/>
    <property type="match status" value="1"/>
</dbReference>
<dbReference type="Gene3D" id="3.30.1300.10">
    <property type="entry name" value="Pantoate-beta-alanine ligase, C-terminal domain"/>
    <property type="match status" value="1"/>
</dbReference>
<dbReference type="HAMAP" id="MF_00158">
    <property type="entry name" value="PanC"/>
    <property type="match status" value="1"/>
</dbReference>
<dbReference type="InterPro" id="IPR004821">
    <property type="entry name" value="Cyt_trans-like"/>
</dbReference>
<dbReference type="InterPro" id="IPR003721">
    <property type="entry name" value="Pantoate_ligase"/>
</dbReference>
<dbReference type="InterPro" id="IPR042176">
    <property type="entry name" value="Pantoate_ligase_C"/>
</dbReference>
<dbReference type="InterPro" id="IPR014729">
    <property type="entry name" value="Rossmann-like_a/b/a_fold"/>
</dbReference>
<dbReference type="NCBIfam" id="TIGR00125">
    <property type="entry name" value="cyt_tran_rel"/>
    <property type="match status" value="1"/>
</dbReference>
<dbReference type="NCBIfam" id="TIGR00018">
    <property type="entry name" value="panC"/>
    <property type="match status" value="1"/>
</dbReference>
<dbReference type="PANTHER" id="PTHR21299">
    <property type="entry name" value="CYTIDYLATE KINASE/PANTOATE-BETA-ALANINE LIGASE"/>
    <property type="match status" value="1"/>
</dbReference>
<dbReference type="PANTHER" id="PTHR21299:SF1">
    <property type="entry name" value="PANTOATE--BETA-ALANINE LIGASE"/>
    <property type="match status" value="1"/>
</dbReference>
<dbReference type="Pfam" id="PF02569">
    <property type="entry name" value="Pantoate_ligase"/>
    <property type="match status" value="1"/>
</dbReference>
<dbReference type="SUPFAM" id="SSF52374">
    <property type="entry name" value="Nucleotidylyl transferase"/>
    <property type="match status" value="1"/>
</dbReference>
<reference key="1">
    <citation type="journal article" date="2006" name="BMC Genomics">
        <title>Complete genome sequence of Shigella flexneri 5b and comparison with Shigella flexneri 2a.</title>
        <authorList>
            <person name="Nie H."/>
            <person name="Yang F."/>
            <person name="Zhang X."/>
            <person name="Yang J."/>
            <person name="Chen L."/>
            <person name="Wang J."/>
            <person name="Xiong Z."/>
            <person name="Peng J."/>
            <person name="Sun L."/>
            <person name="Dong J."/>
            <person name="Xue Y."/>
            <person name="Xu X."/>
            <person name="Chen S."/>
            <person name="Yao Z."/>
            <person name="Shen Y."/>
            <person name="Jin Q."/>
        </authorList>
    </citation>
    <scope>NUCLEOTIDE SEQUENCE [LARGE SCALE GENOMIC DNA]</scope>
    <source>
        <strain>8401</strain>
    </source>
</reference>
<name>PANC_SHIF8</name>
<proteinExistence type="inferred from homology"/>
<protein>
    <recommendedName>
        <fullName evidence="1">Pantothenate synthetase</fullName>
        <shortName evidence="1">PS</shortName>
        <ecNumber evidence="1">6.3.2.1</ecNumber>
    </recommendedName>
    <alternativeName>
        <fullName evidence="1">Pantoate--beta-alanine ligase</fullName>
    </alternativeName>
    <alternativeName>
        <fullName evidence="1">Pantoate-activating enzyme</fullName>
    </alternativeName>
</protein>
<sequence>MLIIETLPLLRQQIRRLRMEGKRVALVPTMGNLHNGHMKLVDEAKARADVVVVSIFVNPMQFDRPEDLARYPRTLQEDCEKLNKRKVDLVFAPSVKEIYPNGTETHTYVDVPGLSTMLEGASRPGHFRGVSTIVSKLFNLVQPDIACFGEKDFQQLALIRKMVADMGFDIEIVGVPIMRAKDGLALSSRNGYLTAEQRKIAPGLYKVLSSIADKLQAGERDLDEIITIAGQELNEKGFRADDIQIRDADTLLEVSETSKRAVILVAAWLGDARLIDNKMVELA</sequence>
<organism>
    <name type="scientific">Shigella flexneri serotype 5b (strain 8401)</name>
    <dbReference type="NCBI Taxonomy" id="373384"/>
    <lineage>
        <taxon>Bacteria</taxon>
        <taxon>Pseudomonadati</taxon>
        <taxon>Pseudomonadota</taxon>
        <taxon>Gammaproteobacteria</taxon>
        <taxon>Enterobacterales</taxon>
        <taxon>Enterobacteriaceae</taxon>
        <taxon>Shigella</taxon>
    </lineage>
</organism>
<gene>
    <name evidence="1" type="primary">panC</name>
    <name type="ordered locus">SFV_0123</name>
</gene>
<accession>Q0T868</accession>
<evidence type="ECO:0000255" key="1">
    <source>
        <dbReference type="HAMAP-Rule" id="MF_00158"/>
    </source>
</evidence>